<dbReference type="EMBL" id="CP000720">
    <property type="protein sequence ID" value="ABS49687.1"/>
    <property type="molecule type" value="Genomic_DNA"/>
</dbReference>
<dbReference type="RefSeq" id="WP_002216363.1">
    <property type="nucleotide sequence ID" value="NC_009708.1"/>
</dbReference>
<dbReference type="SMR" id="A7FFQ7"/>
<dbReference type="GeneID" id="57976003"/>
<dbReference type="KEGG" id="ypi:YpsIP31758_1104"/>
<dbReference type="HOGENOM" id="CLU_077094_2_0_6"/>
<dbReference type="Proteomes" id="UP000002412">
    <property type="component" value="Chromosome"/>
</dbReference>
<dbReference type="GO" id="GO:0005886">
    <property type="term" value="C:plasma membrane"/>
    <property type="evidence" value="ECO:0007669"/>
    <property type="project" value="UniProtKB-SubCell"/>
</dbReference>
<dbReference type="GO" id="GO:0005524">
    <property type="term" value="F:ATP binding"/>
    <property type="evidence" value="ECO:0007669"/>
    <property type="project" value="UniProtKB-UniRule"/>
</dbReference>
<dbReference type="GO" id="GO:0008556">
    <property type="term" value="F:P-type potassium transmembrane transporter activity"/>
    <property type="evidence" value="ECO:0007669"/>
    <property type="project" value="InterPro"/>
</dbReference>
<dbReference type="HAMAP" id="MF_00276">
    <property type="entry name" value="KdpC"/>
    <property type="match status" value="1"/>
</dbReference>
<dbReference type="InterPro" id="IPR003820">
    <property type="entry name" value="KdpC"/>
</dbReference>
<dbReference type="NCBIfam" id="TIGR00681">
    <property type="entry name" value="kdpC"/>
    <property type="match status" value="1"/>
</dbReference>
<dbReference type="NCBIfam" id="NF001454">
    <property type="entry name" value="PRK00315.1"/>
    <property type="match status" value="1"/>
</dbReference>
<dbReference type="PANTHER" id="PTHR30042">
    <property type="entry name" value="POTASSIUM-TRANSPORTING ATPASE C CHAIN"/>
    <property type="match status" value="1"/>
</dbReference>
<dbReference type="PANTHER" id="PTHR30042:SF2">
    <property type="entry name" value="POTASSIUM-TRANSPORTING ATPASE KDPC SUBUNIT"/>
    <property type="match status" value="1"/>
</dbReference>
<dbReference type="Pfam" id="PF02669">
    <property type="entry name" value="KdpC"/>
    <property type="match status" value="1"/>
</dbReference>
<dbReference type="PIRSF" id="PIRSF001296">
    <property type="entry name" value="K_ATPase_KdpC"/>
    <property type="match status" value="1"/>
</dbReference>
<organism>
    <name type="scientific">Yersinia pseudotuberculosis serotype O:1b (strain IP 31758)</name>
    <dbReference type="NCBI Taxonomy" id="349747"/>
    <lineage>
        <taxon>Bacteria</taxon>
        <taxon>Pseudomonadati</taxon>
        <taxon>Pseudomonadota</taxon>
        <taxon>Gammaproteobacteria</taxon>
        <taxon>Enterobacterales</taxon>
        <taxon>Yersiniaceae</taxon>
        <taxon>Yersinia</taxon>
    </lineage>
</organism>
<accession>A7FFQ7</accession>
<keyword id="KW-0067">ATP-binding</keyword>
<keyword id="KW-0997">Cell inner membrane</keyword>
<keyword id="KW-1003">Cell membrane</keyword>
<keyword id="KW-0406">Ion transport</keyword>
<keyword id="KW-0472">Membrane</keyword>
<keyword id="KW-0547">Nucleotide-binding</keyword>
<keyword id="KW-0630">Potassium</keyword>
<keyword id="KW-0633">Potassium transport</keyword>
<keyword id="KW-0812">Transmembrane</keyword>
<keyword id="KW-1133">Transmembrane helix</keyword>
<keyword id="KW-0813">Transport</keyword>
<reference key="1">
    <citation type="journal article" date="2007" name="PLoS Genet.">
        <title>The complete genome sequence of Yersinia pseudotuberculosis IP31758, the causative agent of Far East scarlet-like fever.</title>
        <authorList>
            <person name="Eppinger M."/>
            <person name="Rosovitz M.J."/>
            <person name="Fricke W.F."/>
            <person name="Rasko D.A."/>
            <person name="Kokorina G."/>
            <person name="Fayolle C."/>
            <person name="Lindler L.E."/>
            <person name="Carniel E."/>
            <person name="Ravel J."/>
        </authorList>
    </citation>
    <scope>NUCLEOTIDE SEQUENCE [LARGE SCALE GENOMIC DNA]</scope>
    <source>
        <strain>IP 31758</strain>
    </source>
</reference>
<evidence type="ECO:0000255" key="1">
    <source>
        <dbReference type="HAMAP-Rule" id="MF_00276"/>
    </source>
</evidence>
<sequence>MSYLRPALVLLILLTLITGIAYPLLTTGLAHLMFSQQASGSLARLGDNVVGSTLIGQNFTQPGYFTGRPSATADRPYNPMASGGSNLASSNPALGQAIGERVKLQRQANPTQLGPVPVDLVTASGSGLDPHISLAAAYYQAPRIASIRQMPLSDVQQLIDNSMQKAIPSFFGEPVVNVLNLNMALDSHSHVKVPANPAKP</sequence>
<name>KDPC_YERP3</name>
<gene>
    <name evidence="1" type="primary">kdpC</name>
    <name type="ordered locus">YpsIP31758_1104</name>
</gene>
<comment type="function">
    <text evidence="1">Part of the high-affinity ATP-driven potassium transport (or Kdp) system, which catalyzes the hydrolysis of ATP coupled with the electrogenic transport of potassium into the cytoplasm. This subunit acts as a catalytic chaperone that increases the ATP-binding affinity of the ATP-hydrolyzing subunit KdpB by the formation of a transient KdpB/KdpC/ATP ternary complex.</text>
</comment>
<comment type="subunit">
    <text evidence="1">The system is composed of three essential subunits: KdpA, KdpB and KdpC.</text>
</comment>
<comment type="subcellular location">
    <subcellularLocation>
        <location evidence="1">Cell inner membrane</location>
        <topology evidence="1">Single-pass membrane protein</topology>
    </subcellularLocation>
</comment>
<comment type="similarity">
    <text evidence="1">Belongs to the KdpC family.</text>
</comment>
<feature type="chain" id="PRO_1000059220" description="Potassium-transporting ATPase KdpC subunit">
    <location>
        <begin position="1"/>
        <end position="200"/>
    </location>
</feature>
<feature type="transmembrane region" description="Helical" evidence="1">
    <location>
        <begin position="6"/>
        <end position="26"/>
    </location>
</feature>
<protein>
    <recommendedName>
        <fullName evidence="1">Potassium-transporting ATPase KdpC subunit</fullName>
    </recommendedName>
    <alternativeName>
        <fullName evidence="1">ATP phosphohydrolase [potassium-transporting] C chain</fullName>
    </alternativeName>
    <alternativeName>
        <fullName evidence="1">Potassium-binding and translocating subunit C</fullName>
    </alternativeName>
    <alternativeName>
        <fullName evidence="1">Potassium-translocating ATPase C chain</fullName>
    </alternativeName>
</protein>
<proteinExistence type="inferred from homology"/>